<organism>
    <name type="scientific">Methanocorpusculum labreanum (strain ATCC 43576 / DSM 4855 / Z)</name>
    <dbReference type="NCBI Taxonomy" id="410358"/>
    <lineage>
        <taxon>Archaea</taxon>
        <taxon>Methanobacteriati</taxon>
        <taxon>Methanobacteriota</taxon>
        <taxon>Stenosarchaea group</taxon>
        <taxon>Methanomicrobia</taxon>
        <taxon>Methanomicrobiales</taxon>
        <taxon>Methanocorpusculaceae</taxon>
        <taxon>Methanocorpusculum</taxon>
    </lineage>
</organism>
<comment type="function">
    <text evidence="1">Catalyzes the transfer of a ribosyl phosphate group from 5-phosphoribose 1-diphosphate to orotate, leading to the formation of orotidine monophosphate (OMP).</text>
</comment>
<comment type="catalytic activity">
    <reaction evidence="1">
        <text>orotidine 5'-phosphate + diphosphate = orotate + 5-phospho-alpha-D-ribose 1-diphosphate</text>
        <dbReference type="Rhea" id="RHEA:10380"/>
        <dbReference type="ChEBI" id="CHEBI:30839"/>
        <dbReference type="ChEBI" id="CHEBI:33019"/>
        <dbReference type="ChEBI" id="CHEBI:57538"/>
        <dbReference type="ChEBI" id="CHEBI:58017"/>
        <dbReference type="EC" id="2.4.2.10"/>
    </reaction>
</comment>
<comment type="cofactor">
    <cofactor evidence="1">
        <name>Mg(2+)</name>
        <dbReference type="ChEBI" id="CHEBI:18420"/>
    </cofactor>
</comment>
<comment type="pathway">
    <text evidence="1">Pyrimidine metabolism; UMP biosynthesis via de novo pathway; UMP from orotate: step 1/2.</text>
</comment>
<comment type="subunit">
    <text evidence="1">Homodimer.</text>
</comment>
<comment type="similarity">
    <text evidence="1">Belongs to the purine/pyrimidine phosphoribosyltransferase family. PyrE subfamily.</text>
</comment>
<evidence type="ECO:0000255" key="1">
    <source>
        <dbReference type="HAMAP-Rule" id="MF_01208"/>
    </source>
</evidence>
<proteinExistence type="inferred from homology"/>
<feature type="chain" id="PRO_0000298884" description="Orotate phosphoribosyltransferase">
    <location>
        <begin position="1"/>
        <end position="169"/>
    </location>
</feature>
<feature type="binding site" evidence="1">
    <location>
        <position position="86"/>
    </location>
    <ligand>
        <name>5-phospho-alpha-D-ribose 1-diphosphate</name>
        <dbReference type="ChEBI" id="CHEBI:58017"/>
        <note>ligand shared between dimeric partners</note>
    </ligand>
</feature>
<feature type="binding site" evidence="1">
    <location>
        <position position="90"/>
    </location>
    <ligand>
        <name>5-phospho-alpha-D-ribose 1-diphosphate</name>
        <dbReference type="ChEBI" id="CHEBI:58017"/>
        <note>ligand shared between dimeric partners</note>
    </ligand>
</feature>
<feature type="binding site" evidence="1">
    <location>
        <position position="92"/>
    </location>
    <ligand>
        <name>5-phospho-alpha-D-ribose 1-diphosphate</name>
        <dbReference type="ChEBI" id="CHEBI:58017"/>
        <note>ligand shared between dimeric partners</note>
    </ligand>
</feature>
<feature type="binding site" description="in other chain" evidence="1">
    <location>
        <begin position="111"/>
        <end position="119"/>
    </location>
    <ligand>
        <name>5-phospho-alpha-D-ribose 1-diphosphate</name>
        <dbReference type="ChEBI" id="CHEBI:58017"/>
        <note>ligand shared between dimeric partners</note>
    </ligand>
</feature>
<feature type="binding site" evidence="1">
    <location>
        <position position="115"/>
    </location>
    <ligand>
        <name>orotate</name>
        <dbReference type="ChEBI" id="CHEBI:30839"/>
    </ligand>
</feature>
<feature type="binding site" evidence="1">
    <location>
        <position position="143"/>
    </location>
    <ligand>
        <name>orotate</name>
        <dbReference type="ChEBI" id="CHEBI:30839"/>
    </ligand>
</feature>
<sequence>MVNRILDLLIQYKAVEFGDFTLASGAQSKYYIDVKTAIMQPELLSEIAAEVAKKYDFECIAGVAVGGVPLAVAVSLAANKPCAVIRAAAKDHGKSQMIIGNVKGQRVLLIEDVTTSGGSSKYGVEELRKAGALIDSVVTVVDREGGAEELLAAEGITLHPLVKASELLA</sequence>
<keyword id="KW-0328">Glycosyltransferase</keyword>
<keyword id="KW-0460">Magnesium</keyword>
<keyword id="KW-0665">Pyrimidine biosynthesis</keyword>
<keyword id="KW-1185">Reference proteome</keyword>
<keyword id="KW-0808">Transferase</keyword>
<dbReference type="EC" id="2.4.2.10" evidence="1"/>
<dbReference type="EMBL" id="CP000559">
    <property type="protein sequence ID" value="ABN06493.1"/>
    <property type="molecule type" value="Genomic_DNA"/>
</dbReference>
<dbReference type="RefSeq" id="WP_011832694.1">
    <property type="nucleotide sequence ID" value="NC_008942.1"/>
</dbReference>
<dbReference type="SMR" id="A2SQ87"/>
<dbReference type="STRING" id="410358.Mlab_0317"/>
<dbReference type="GeneID" id="4795219"/>
<dbReference type="KEGG" id="mla:Mlab_0317"/>
<dbReference type="eggNOG" id="arCOG00029">
    <property type="taxonomic scope" value="Archaea"/>
</dbReference>
<dbReference type="HOGENOM" id="CLU_074878_2_0_2"/>
<dbReference type="OrthoDB" id="9089at2157"/>
<dbReference type="UniPathway" id="UPA00070">
    <property type="reaction ID" value="UER00119"/>
</dbReference>
<dbReference type="Proteomes" id="UP000000365">
    <property type="component" value="Chromosome"/>
</dbReference>
<dbReference type="GO" id="GO:0000287">
    <property type="term" value="F:magnesium ion binding"/>
    <property type="evidence" value="ECO:0007669"/>
    <property type="project" value="UniProtKB-UniRule"/>
</dbReference>
<dbReference type="GO" id="GO:0004588">
    <property type="term" value="F:orotate phosphoribosyltransferase activity"/>
    <property type="evidence" value="ECO:0007669"/>
    <property type="project" value="UniProtKB-UniRule"/>
</dbReference>
<dbReference type="GO" id="GO:0044205">
    <property type="term" value="P:'de novo' UMP biosynthetic process"/>
    <property type="evidence" value="ECO:0007669"/>
    <property type="project" value="UniProtKB-UniRule"/>
</dbReference>
<dbReference type="GO" id="GO:0019856">
    <property type="term" value="P:pyrimidine nucleobase biosynthetic process"/>
    <property type="evidence" value="ECO:0007669"/>
    <property type="project" value="TreeGrafter"/>
</dbReference>
<dbReference type="CDD" id="cd06223">
    <property type="entry name" value="PRTases_typeI"/>
    <property type="match status" value="1"/>
</dbReference>
<dbReference type="Gene3D" id="3.40.50.2020">
    <property type="match status" value="1"/>
</dbReference>
<dbReference type="HAMAP" id="MF_01208">
    <property type="entry name" value="PyrE"/>
    <property type="match status" value="1"/>
</dbReference>
<dbReference type="InterPro" id="IPR023031">
    <property type="entry name" value="OPRT"/>
</dbReference>
<dbReference type="InterPro" id="IPR004467">
    <property type="entry name" value="Or_phspho_trans_dom"/>
</dbReference>
<dbReference type="InterPro" id="IPR000836">
    <property type="entry name" value="PRibTrfase_dom"/>
</dbReference>
<dbReference type="InterPro" id="IPR029057">
    <property type="entry name" value="PRTase-like"/>
</dbReference>
<dbReference type="NCBIfam" id="TIGR00336">
    <property type="entry name" value="pyrE"/>
    <property type="match status" value="1"/>
</dbReference>
<dbReference type="PANTHER" id="PTHR19278">
    <property type="entry name" value="OROTATE PHOSPHORIBOSYLTRANSFERASE"/>
    <property type="match status" value="1"/>
</dbReference>
<dbReference type="PANTHER" id="PTHR19278:SF9">
    <property type="entry name" value="URIDINE 5'-MONOPHOSPHATE SYNTHASE"/>
    <property type="match status" value="1"/>
</dbReference>
<dbReference type="Pfam" id="PF00156">
    <property type="entry name" value="Pribosyltran"/>
    <property type="match status" value="1"/>
</dbReference>
<dbReference type="SUPFAM" id="SSF53271">
    <property type="entry name" value="PRTase-like"/>
    <property type="match status" value="1"/>
</dbReference>
<protein>
    <recommendedName>
        <fullName evidence="1">Orotate phosphoribosyltransferase</fullName>
        <shortName evidence="1">OPRT</shortName>
        <shortName evidence="1">OPRTase</shortName>
        <ecNumber evidence="1">2.4.2.10</ecNumber>
    </recommendedName>
</protein>
<gene>
    <name evidence="1" type="primary">pyrE</name>
    <name type="ordered locus">Mlab_0317</name>
</gene>
<accession>A2SQ87</accession>
<name>PYRE_METLZ</name>
<reference key="1">
    <citation type="journal article" date="2009" name="Stand. Genomic Sci.">
        <title>Complete genome sequence of Methanocorpusculum labreanum type strain Z.</title>
        <authorList>
            <person name="Anderson I.J."/>
            <person name="Sieprawska-Lupa M."/>
            <person name="Goltsman E."/>
            <person name="Lapidus A."/>
            <person name="Copeland A."/>
            <person name="Glavina Del Rio T."/>
            <person name="Tice H."/>
            <person name="Dalin E."/>
            <person name="Barry K."/>
            <person name="Pitluck S."/>
            <person name="Hauser L."/>
            <person name="Land M."/>
            <person name="Lucas S."/>
            <person name="Richardson P."/>
            <person name="Whitman W.B."/>
            <person name="Kyrpides N.C."/>
        </authorList>
    </citation>
    <scope>NUCLEOTIDE SEQUENCE [LARGE SCALE GENOMIC DNA]</scope>
    <source>
        <strain>ATCC 43576 / DSM 4855 / Z</strain>
    </source>
</reference>